<feature type="chain" id="PRO_1000166528" description="ATP synthase subunit alpha">
    <location>
        <begin position="1"/>
        <end position="510"/>
    </location>
</feature>
<feature type="binding site" evidence="1">
    <location>
        <begin position="170"/>
        <end position="177"/>
    </location>
    <ligand>
        <name>ATP</name>
        <dbReference type="ChEBI" id="CHEBI:30616"/>
    </ligand>
</feature>
<feature type="site" description="Required for activity" evidence="1">
    <location>
        <position position="371"/>
    </location>
</feature>
<name>ATPA_CAUVN</name>
<organism>
    <name type="scientific">Caulobacter vibrioides (strain NA1000 / CB15N)</name>
    <name type="common">Caulobacter crescentus</name>
    <dbReference type="NCBI Taxonomy" id="565050"/>
    <lineage>
        <taxon>Bacteria</taxon>
        <taxon>Pseudomonadati</taxon>
        <taxon>Pseudomonadota</taxon>
        <taxon>Alphaproteobacteria</taxon>
        <taxon>Caulobacterales</taxon>
        <taxon>Caulobacteraceae</taxon>
        <taxon>Caulobacter</taxon>
    </lineage>
</organism>
<proteinExistence type="inferred from homology"/>
<sequence length="510" mass="55294">MDIRAAEISAILKSQIANFGEEAAVSDVGQVLSVGDGIARIYGLDNVQAGEMLEFPKAGVKGMALNLERDNVGAVIFGQDQEIKEGDEVRRLGEIVDVPVGRGLLGRVVNPLGEPIDGKGPIQYTERRRVDVKAPGIIPRKSVHEPVQTGLKSIDTLIPVGRGQRELIIGDRQTGKTAVAIDTILNQKAVNAGKDESAKLYCVYVAIGQKRSTVAQIVKTLEEHGALEYTTVVVASASEPAPLQYLAPFAGCAMGEWFRDNGLHGLIIYDDLSKQAVAYRQMSLLLRRPPGREAYPGDVFYLHSRLLERAAKLNEDNGSGSLTALPIIETQANDVSAYIPTNVISITDGQIFLETDLFYQGIRPAVNVGISVSRVGSSAQIKAMKQVAGPIKGELAQYREMAAFAKFGSDLDASTQKMLARGERLTELLKQPQYAPLSVEEQVCVIYAGTRGYLDGIPTSSVRRFEAEFLARLHSQHADLLEGIRTKKALDKDLENTLKSALDSFSSTFA</sequence>
<protein>
    <recommendedName>
        <fullName evidence="1">ATP synthase subunit alpha</fullName>
        <ecNumber evidence="1">7.1.2.2</ecNumber>
    </recommendedName>
    <alternativeName>
        <fullName evidence="1">ATP synthase F1 sector subunit alpha</fullName>
    </alternativeName>
    <alternativeName>
        <fullName evidence="1">F-ATPase subunit alpha</fullName>
    </alternativeName>
</protein>
<evidence type="ECO:0000255" key="1">
    <source>
        <dbReference type="HAMAP-Rule" id="MF_01346"/>
    </source>
</evidence>
<reference key="1">
    <citation type="journal article" date="2010" name="J. Bacteriol.">
        <title>The genetic basis of laboratory adaptation in Caulobacter crescentus.</title>
        <authorList>
            <person name="Marks M.E."/>
            <person name="Castro-Rojas C.M."/>
            <person name="Teiling C."/>
            <person name="Du L."/>
            <person name="Kapatral V."/>
            <person name="Walunas T.L."/>
            <person name="Crosson S."/>
        </authorList>
    </citation>
    <scope>NUCLEOTIDE SEQUENCE [LARGE SCALE GENOMIC DNA]</scope>
    <source>
        <strain>NA1000 / CB15N</strain>
    </source>
</reference>
<gene>
    <name evidence="1" type="primary">atpA</name>
    <name type="ordered locus">CCNA_03562</name>
</gene>
<accession>B8H5I2</accession>
<keyword id="KW-0066">ATP synthesis</keyword>
<keyword id="KW-0067">ATP-binding</keyword>
<keyword id="KW-0997">Cell inner membrane</keyword>
<keyword id="KW-1003">Cell membrane</keyword>
<keyword id="KW-0139">CF(1)</keyword>
<keyword id="KW-0375">Hydrogen ion transport</keyword>
<keyword id="KW-0406">Ion transport</keyword>
<keyword id="KW-0472">Membrane</keyword>
<keyword id="KW-0547">Nucleotide-binding</keyword>
<keyword id="KW-1185">Reference proteome</keyword>
<keyword id="KW-1278">Translocase</keyword>
<keyword id="KW-0813">Transport</keyword>
<comment type="function">
    <text evidence="1">Produces ATP from ADP in the presence of a proton gradient across the membrane. The alpha chain is a regulatory subunit.</text>
</comment>
<comment type="catalytic activity">
    <reaction evidence="1">
        <text>ATP + H2O + 4 H(+)(in) = ADP + phosphate + 5 H(+)(out)</text>
        <dbReference type="Rhea" id="RHEA:57720"/>
        <dbReference type="ChEBI" id="CHEBI:15377"/>
        <dbReference type="ChEBI" id="CHEBI:15378"/>
        <dbReference type="ChEBI" id="CHEBI:30616"/>
        <dbReference type="ChEBI" id="CHEBI:43474"/>
        <dbReference type="ChEBI" id="CHEBI:456216"/>
        <dbReference type="EC" id="7.1.2.2"/>
    </reaction>
</comment>
<comment type="subunit">
    <text evidence="1">F-type ATPases have 2 components, CF(1) - the catalytic core - and CF(0) - the membrane proton channel. CF(1) has five subunits: alpha(3), beta(3), gamma(1), delta(1), epsilon(1). CF(0) has three main subunits: a(1), b(2) and c(9-12). The alpha and beta chains form an alternating ring which encloses part of the gamma chain. CF(1) is attached to CF(0) by a central stalk formed by the gamma and epsilon chains, while a peripheral stalk is formed by the delta and b chains.</text>
</comment>
<comment type="subcellular location">
    <subcellularLocation>
        <location evidence="1">Cell inner membrane</location>
        <topology evidence="1">Peripheral membrane protein</topology>
    </subcellularLocation>
</comment>
<comment type="similarity">
    <text evidence="1">Belongs to the ATPase alpha/beta chains family.</text>
</comment>
<dbReference type="EC" id="7.1.2.2" evidence="1"/>
<dbReference type="EMBL" id="CP001340">
    <property type="protein sequence ID" value="ACL97027.1"/>
    <property type="molecule type" value="Genomic_DNA"/>
</dbReference>
<dbReference type="RefSeq" id="WP_010921278.1">
    <property type="nucleotide sequence ID" value="NC_011916.1"/>
</dbReference>
<dbReference type="RefSeq" id="YP_002518935.1">
    <property type="nucleotide sequence ID" value="NC_011916.1"/>
</dbReference>
<dbReference type="SMR" id="B8H5I2"/>
<dbReference type="GeneID" id="7332560"/>
<dbReference type="KEGG" id="ccs:CCNA_03562"/>
<dbReference type="PATRIC" id="fig|565050.3.peg.3477"/>
<dbReference type="HOGENOM" id="CLU_010091_2_1_5"/>
<dbReference type="OrthoDB" id="9803053at2"/>
<dbReference type="PhylomeDB" id="B8H5I2"/>
<dbReference type="Proteomes" id="UP000001364">
    <property type="component" value="Chromosome"/>
</dbReference>
<dbReference type="GO" id="GO:0005886">
    <property type="term" value="C:plasma membrane"/>
    <property type="evidence" value="ECO:0007669"/>
    <property type="project" value="UniProtKB-SubCell"/>
</dbReference>
<dbReference type="GO" id="GO:0045259">
    <property type="term" value="C:proton-transporting ATP synthase complex"/>
    <property type="evidence" value="ECO:0007669"/>
    <property type="project" value="UniProtKB-KW"/>
</dbReference>
<dbReference type="GO" id="GO:0043531">
    <property type="term" value="F:ADP binding"/>
    <property type="evidence" value="ECO:0007669"/>
    <property type="project" value="TreeGrafter"/>
</dbReference>
<dbReference type="GO" id="GO:0005524">
    <property type="term" value="F:ATP binding"/>
    <property type="evidence" value="ECO:0007669"/>
    <property type="project" value="UniProtKB-UniRule"/>
</dbReference>
<dbReference type="GO" id="GO:0046933">
    <property type="term" value="F:proton-transporting ATP synthase activity, rotational mechanism"/>
    <property type="evidence" value="ECO:0007669"/>
    <property type="project" value="UniProtKB-UniRule"/>
</dbReference>
<dbReference type="CDD" id="cd18113">
    <property type="entry name" value="ATP-synt_F1_alpha_C"/>
    <property type="match status" value="1"/>
</dbReference>
<dbReference type="CDD" id="cd18116">
    <property type="entry name" value="ATP-synt_F1_alpha_N"/>
    <property type="match status" value="1"/>
</dbReference>
<dbReference type="CDD" id="cd01132">
    <property type="entry name" value="F1-ATPase_alpha_CD"/>
    <property type="match status" value="1"/>
</dbReference>
<dbReference type="FunFam" id="1.20.150.20:FF:000001">
    <property type="entry name" value="ATP synthase subunit alpha"/>
    <property type="match status" value="1"/>
</dbReference>
<dbReference type="FunFam" id="2.40.30.20:FF:000001">
    <property type="entry name" value="ATP synthase subunit alpha"/>
    <property type="match status" value="1"/>
</dbReference>
<dbReference type="FunFam" id="3.40.50.300:FF:004039">
    <property type="entry name" value="ATP synthase subunit alpha, mitochondrial"/>
    <property type="match status" value="1"/>
</dbReference>
<dbReference type="Gene3D" id="2.40.30.20">
    <property type="match status" value="1"/>
</dbReference>
<dbReference type="Gene3D" id="1.20.150.20">
    <property type="entry name" value="ATP synthase alpha/beta chain, C-terminal domain"/>
    <property type="match status" value="1"/>
</dbReference>
<dbReference type="Gene3D" id="3.40.50.300">
    <property type="entry name" value="P-loop containing nucleotide triphosphate hydrolases"/>
    <property type="match status" value="1"/>
</dbReference>
<dbReference type="HAMAP" id="MF_01346">
    <property type="entry name" value="ATP_synth_alpha_bact"/>
    <property type="match status" value="1"/>
</dbReference>
<dbReference type="InterPro" id="IPR023366">
    <property type="entry name" value="ATP_synth_asu-like_sf"/>
</dbReference>
<dbReference type="InterPro" id="IPR000793">
    <property type="entry name" value="ATP_synth_asu_C"/>
</dbReference>
<dbReference type="InterPro" id="IPR038376">
    <property type="entry name" value="ATP_synth_asu_C_sf"/>
</dbReference>
<dbReference type="InterPro" id="IPR033732">
    <property type="entry name" value="ATP_synth_F1_a_nt-bd_dom"/>
</dbReference>
<dbReference type="InterPro" id="IPR005294">
    <property type="entry name" value="ATP_synth_F1_asu"/>
</dbReference>
<dbReference type="InterPro" id="IPR020003">
    <property type="entry name" value="ATPase_a/bsu_AS"/>
</dbReference>
<dbReference type="InterPro" id="IPR004100">
    <property type="entry name" value="ATPase_F1/V1/A1_a/bsu_N"/>
</dbReference>
<dbReference type="InterPro" id="IPR036121">
    <property type="entry name" value="ATPase_F1/V1/A1_a/bsu_N_sf"/>
</dbReference>
<dbReference type="InterPro" id="IPR000194">
    <property type="entry name" value="ATPase_F1/V1/A1_a/bsu_nucl-bd"/>
</dbReference>
<dbReference type="InterPro" id="IPR027417">
    <property type="entry name" value="P-loop_NTPase"/>
</dbReference>
<dbReference type="NCBIfam" id="TIGR00962">
    <property type="entry name" value="atpA"/>
    <property type="match status" value="1"/>
</dbReference>
<dbReference type="NCBIfam" id="NF009884">
    <property type="entry name" value="PRK13343.1"/>
    <property type="match status" value="1"/>
</dbReference>
<dbReference type="PANTHER" id="PTHR48082">
    <property type="entry name" value="ATP SYNTHASE SUBUNIT ALPHA, MITOCHONDRIAL"/>
    <property type="match status" value="1"/>
</dbReference>
<dbReference type="PANTHER" id="PTHR48082:SF2">
    <property type="entry name" value="ATP SYNTHASE SUBUNIT ALPHA, MITOCHONDRIAL"/>
    <property type="match status" value="1"/>
</dbReference>
<dbReference type="Pfam" id="PF00006">
    <property type="entry name" value="ATP-synt_ab"/>
    <property type="match status" value="1"/>
</dbReference>
<dbReference type="Pfam" id="PF00306">
    <property type="entry name" value="ATP-synt_ab_C"/>
    <property type="match status" value="1"/>
</dbReference>
<dbReference type="Pfam" id="PF02874">
    <property type="entry name" value="ATP-synt_ab_N"/>
    <property type="match status" value="1"/>
</dbReference>
<dbReference type="PIRSF" id="PIRSF039088">
    <property type="entry name" value="F_ATPase_subunit_alpha"/>
    <property type="match status" value="1"/>
</dbReference>
<dbReference type="SUPFAM" id="SSF47917">
    <property type="entry name" value="C-terminal domain of alpha and beta subunits of F1 ATP synthase"/>
    <property type="match status" value="1"/>
</dbReference>
<dbReference type="SUPFAM" id="SSF50615">
    <property type="entry name" value="N-terminal domain of alpha and beta subunits of F1 ATP synthase"/>
    <property type="match status" value="1"/>
</dbReference>
<dbReference type="SUPFAM" id="SSF52540">
    <property type="entry name" value="P-loop containing nucleoside triphosphate hydrolases"/>
    <property type="match status" value="1"/>
</dbReference>
<dbReference type="PROSITE" id="PS00152">
    <property type="entry name" value="ATPASE_ALPHA_BETA"/>
    <property type="match status" value="1"/>
</dbReference>